<name>LEPA_CLOBL</name>
<keyword id="KW-1003">Cell membrane</keyword>
<keyword id="KW-0342">GTP-binding</keyword>
<keyword id="KW-0378">Hydrolase</keyword>
<keyword id="KW-0472">Membrane</keyword>
<keyword id="KW-0547">Nucleotide-binding</keyword>
<keyword id="KW-0648">Protein biosynthesis</keyword>
<proteinExistence type="inferred from homology"/>
<reference key="1">
    <citation type="submission" date="2007-06" db="EMBL/GenBank/DDBJ databases">
        <authorList>
            <person name="Brinkac L.M."/>
            <person name="Daugherty S."/>
            <person name="Dodson R.J."/>
            <person name="Madupu R."/>
            <person name="Brown J.L."/>
            <person name="Bruce D."/>
            <person name="Detter C."/>
            <person name="Munk C."/>
            <person name="Smith L.A."/>
            <person name="Smith T.J."/>
            <person name="White O."/>
            <person name="Brettin T.S."/>
        </authorList>
    </citation>
    <scope>NUCLEOTIDE SEQUENCE [LARGE SCALE GENOMIC DNA]</scope>
    <source>
        <strain>Langeland / NCTC 10281 / Type F</strain>
    </source>
</reference>
<protein>
    <recommendedName>
        <fullName evidence="1">Elongation factor 4</fullName>
        <shortName evidence="1">EF-4</shortName>
        <ecNumber evidence="1">3.6.5.n1</ecNumber>
    </recommendedName>
    <alternativeName>
        <fullName evidence="1">Ribosomal back-translocase LepA</fullName>
    </alternativeName>
</protein>
<comment type="function">
    <text evidence="1">Required for accurate and efficient protein synthesis under certain stress conditions. May act as a fidelity factor of the translation reaction, by catalyzing a one-codon backward translocation of tRNAs on improperly translocated ribosomes. Back-translocation proceeds from a post-translocation (POST) complex to a pre-translocation (PRE) complex, thus giving elongation factor G a second chance to translocate the tRNAs correctly. Binds to ribosomes in a GTP-dependent manner.</text>
</comment>
<comment type="catalytic activity">
    <reaction evidence="1">
        <text>GTP + H2O = GDP + phosphate + H(+)</text>
        <dbReference type="Rhea" id="RHEA:19669"/>
        <dbReference type="ChEBI" id="CHEBI:15377"/>
        <dbReference type="ChEBI" id="CHEBI:15378"/>
        <dbReference type="ChEBI" id="CHEBI:37565"/>
        <dbReference type="ChEBI" id="CHEBI:43474"/>
        <dbReference type="ChEBI" id="CHEBI:58189"/>
        <dbReference type="EC" id="3.6.5.n1"/>
    </reaction>
</comment>
<comment type="subcellular location">
    <subcellularLocation>
        <location evidence="1">Cell membrane</location>
        <topology evidence="1">Peripheral membrane protein</topology>
        <orientation evidence="1">Cytoplasmic side</orientation>
    </subcellularLocation>
</comment>
<comment type="similarity">
    <text evidence="1">Belongs to the TRAFAC class translation factor GTPase superfamily. Classic translation factor GTPase family. LepA subfamily.</text>
</comment>
<dbReference type="EC" id="3.6.5.n1" evidence="1"/>
<dbReference type="EMBL" id="CP000728">
    <property type="protein sequence ID" value="ABS40145.1"/>
    <property type="molecule type" value="Genomic_DNA"/>
</dbReference>
<dbReference type="RefSeq" id="WP_003400365.1">
    <property type="nucleotide sequence ID" value="NC_009699.1"/>
</dbReference>
<dbReference type="SMR" id="A7GHI0"/>
<dbReference type="KEGG" id="cbf:CLI_3016"/>
<dbReference type="HOGENOM" id="CLU_009995_3_3_9"/>
<dbReference type="Proteomes" id="UP000002410">
    <property type="component" value="Chromosome"/>
</dbReference>
<dbReference type="GO" id="GO:0005886">
    <property type="term" value="C:plasma membrane"/>
    <property type="evidence" value="ECO:0007669"/>
    <property type="project" value="UniProtKB-SubCell"/>
</dbReference>
<dbReference type="GO" id="GO:0005525">
    <property type="term" value="F:GTP binding"/>
    <property type="evidence" value="ECO:0007669"/>
    <property type="project" value="UniProtKB-UniRule"/>
</dbReference>
<dbReference type="GO" id="GO:0003924">
    <property type="term" value="F:GTPase activity"/>
    <property type="evidence" value="ECO:0007669"/>
    <property type="project" value="UniProtKB-UniRule"/>
</dbReference>
<dbReference type="GO" id="GO:0043022">
    <property type="term" value="F:ribosome binding"/>
    <property type="evidence" value="ECO:0007669"/>
    <property type="project" value="UniProtKB-UniRule"/>
</dbReference>
<dbReference type="GO" id="GO:0003746">
    <property type="term" value="F:translation elongation factor activity"/>
    <property type="evidence" value="ECO:0007669"/>
    <property type="project" value="UniProtKB-UniRule"/>
</dbReference>
<dbReference type="GO" id="GO:0045727">
    <property type="term" value="P:positive regulation of translation"/>
    <property type="evidence" value="ECO:0007669"/>
    <property type="project" value="UniProtKB-UniRule"/>
</dbReference>
<dbReference type="CDD" id="cd03699">
    <property type="entry name" value="EF4_II"/>
    <property type="match status" value="1"/>
</dbReference>
<dbReference type="CDD" id="cd16260">
    <property type="entry name" value="EF4_III"/>
    <property type="match status" value="1"/>
</dbReference>
<dbReference type="CDD" id="cd01890">
    <property type="entry name" value="LepA"/>
    <property type="match status" value="1"/>
</dbReference>
<dbReference type="CDD" id="cd03709">
    <property type="entry name" value="lepA_C"/>
    <property type="match status" value="1"/>
</dbReference>
<dbReference type="FunFam" id="3.40.50.300:FF:000078">
    <property type="entry name" value="Elongation factor 4"/>
    <property type="match status" value="1"/>
</dbReference>
<dbReference type="FunFam" id="2.40.30.10:FF:000015">
    <property type="entry name" value="Translation factor GUF1, mitochondrial"/>
    <property type="match status" value="1"/>
</dbReference>
<dbReference type="FunFam" id="3.30.70.240:FF:000007">
    <property type="entry name" value="Translation factor GUF1, mitochondrial"/>
    <property type="match status" value="1"/>
</dbReference>
<dbReference type="FunFam" id="3.30.70.2570:FF:000001">
    <property type="entry name" value="Translation factor GUF1, mitochondrial"/>
    <property type="match status" value="1"/>
</dbReference>
<dbReference type="FunFam" id="3.30.70.870:FF:000004">
    <property type="entry name" value="Translation factor GUF1, mitochondrial"/>
    <property type="match status" value="1"/>
</dbReference>
<dbReference type="Gene3D" id="3.30.70.240">
    <property type="match status" value="1"/>
</dbReference>
<dbReference type="Gene3D" id="3.30.70.2570">
    <property type="entry name" value="Elongation factor 4, C-terminal domain"/>
    <property type="match status" value="1"/>
</dbReference>
<dbReference type="Gene3D" id="3.30.70.870">
    <property type="entry name" value="Elongation Factor G (Translational Gtpase), domain 3"/>
    <property type="match status" value="1"/>
</dbReference>
<dbReference type="Gene3D" id="3.40.50.300">
    <property type="entry name" value="P-loop containing nucleotide triphosphate hydrolases"/>
    <property type="match status" value="1"/>
</dbReference>
<dbReference type="Gene3D" id="2.40.30.10">
    <property type="entry name" value="Translation factors"/>
    <property type="match status" value="1"/>
</dbReference>
<dbReference type="HAMAP" id="MF_00071">
    <property type="entry name" value="LepA"/>
    <property type="match status" value="1"/>
</dbReference>
<dbReference type="InterPro" id="IPR006297">
    <property type="entry name" value="EF-4"/>
</dbReference>
<dbReference type="InterPro" id="IPR035647">
    <property type="entry name" value="EFG_III/V"/>
</dbReference>
<dbReference type="InterPro" id="IPR000640">
    <property type="entry name" value="EFG_V-like"/>
</dbReference>
<dbReference type="InterPro" id="IPR004161">
    <property type="entry name" value="EFTu-like_2"/>
</dbReference>
<dbReference type="InterPro" id="IPR031157">
    <property type="entry name" value="G_TR_CS"/>
</dbReference>
<dbReference type="InterPro" id="IPR038363">
    <property type="entry name" value="LepA_C_sf"/>
</dbReference>
<dbReference type="InterPro" id="IPR013842">
    <property type="entry name" value="LepA_CTD"/>
</dbReference>
<dbReference type="InterPro" id="IPR035654">
    <property type="entry name" value="LepA_IV"/>
</dbReference>
<dbReference type="InterPro" id="IPR027417">
    <property type="entry name" value="P-loop_NTPase"/>
</dbReference>
<dbReference type="InterPro" id="IPR005225">
    <property type="entry name" value="Small_GTP-bd"/>
</dbReference>
<dbReference type="InterPro" id="IPR000795">
    <property type="entry name" value="T_Tr_GTP-bd_dom"/>
</dbReference>
<dbReference type="NCBIfam" id="TIGR01393">
    <property type="entry name" value="lepA"/>
    <property type="match status" value="1"/>
</dbReference>
<dbReference type="NCBIfam" id="TIGR00231">
    <property type="entry name" value="small_GTP"/>
    <property type="match status" value="1"/>
</dbReference>
<dbReference type="PANTHER" id="PTHR43512:SF4">
    <property type="entry name" value="TRANSLATION FACTOR GUF1 HOMOLOG, CHLOROPLASTIC"/>
    <property type="match status" value="1"/>
</dbReference>
<dbReference type="PANTHER" id="PTHR43512">
    <property type="entry name" value="TRANSLATION FACTOR GUF1-RELATED"/>
    <property type="match status" value="1"/>
</dbReference>
<dbReference type="Pfam" id="PF00679">
    <property type="entry name" value="EFG_C"/>
    <property type="match status" value="1"/>
</dbReference>
<dbReference type="Pfam" id="PF00009">
    <property type="entry name" value="GTP_EFTU"/>
    <property type="match status" value="1"/>
</dbReference>
<dbReference type="Pfam" id="PF03144">
    <property type="entry name" value="GTP_EFTU_D2"/>
    <property type="match status" value="1"/>
</dbReference>
<dbReference type="Pfam" id="PF06421">
    <property type="entry name" value="LepA_C"/>
    <property type="match status" value="1"/>
</dbReference>
<dbReference type="PRINTS" id="PR00315">
    <property type="entry name" value="ELONGATNFCT"/>
</dbReference>
<dbReference type="SMART" id="SM00838">
    <property type="entry name" value="EFG_C"/>
    <property type="match status" value="1"/>
</dbReference>
<dbReference type="SUPFAM" id="SSF54980">
    <property type="entry name" value="EF-G C-terminal domain-like"/>
    <property type="match status" value="2"/>
</dbReference>
<dbReference type="SUPFAM" id="SSF52540">
    <property type="entry name" value="P-loop containing nucleoside triphosphate hydrolases"/>
    <property type="match status" value="1"/>
</dbReference>
<dbReference type="PROSITE" id="PS00301">
    <property type="entry name" value="G_TR_1"/>
    <property type="match status" value="1"/>
</dbReference>
<dbReference type="PROSITE" id="PS51722">
    <property type="entry name" value="G_TR_2"/>
    <property type="match status" value="1"/>
</dbReference>
<accession>A7GHI0</accession>
<sequence>MQSERQKYIRNFSIVAHIDHGKSTLADRLIEATGTLTEREMDTQVLDNMDLEKERGITIKSQAVRLIYKRNTGEEYTLNLIDTPGHVDFNYEVSRSLAACEGAILVVDATQGIQAQTLANCYLALDNDLEIVPVINKIDLPSARPEEVKQEIEDVIGIEAEDAPLVSAKTGLNIKDALEAIVNKVPAPEGDEKAPLKALIFDSYYDSYKGVVCHIRVKEGTIKEGTEIKLMNTGKVYEVVEVGVFVPNYMPVDELKAGDVGYVTASIKNVRDARVGDTITEAKRSANEALSGYRPAVPMVFSGIYPVDGAKYEELKEALEKLQVNDAALSFEPETSIALGFGFRCGFLGLLHMDIIQERLEREFNLDIITTAPSVIYKITKTDGTLIELTNPTNMPSPSEIKLMEEPIVKSSIITPSDYVGAVMDLAQNRRGIFKDMQYLDTTRVSLNYEIPLNEIIYDFFDALKSRTRGYASFDYELIGYKDADLVKLDILLNADVVDALSMIVPRERAYAKGRNMAQKLKEIIPRQMFEIPIQAAVGAKIIARETIKAMRKDVLAKCYGGDISRKRKLLEKQKEGKKRMRQVGSVEVPQEAFMAVLKTEE</sequence>
<feature type="chain" id="PRO_1000031990" description="Elongation factor 4">
    <location>
        <begin position="1"/>
        <end position="602"/>
    </location>
</feature>
<feature type="domain" description="tr-type G">
    <location>
        <begin position="7"/>
        <end position="189"/>
    </location>
</feature>
<feature type="binding site" evidence="1">
    <location>
        <begin position="19"/>
        <end position="24"/>
    </location>
    <ligand>
        <name>GTP</name>
        <dbReference type="ChEBI" id="CHEBI:37565"/>
    </ligand>
</feature>
<feature type="binding site" evidence="1">
    <location>
        <begin position="136"/>
        <end position="139"/>
    </location>
    <ligand>
        <name>GTP</name>
        <dbReference type="ChEBI" id="CHEBI:37565"/>
    </ligand>
</feature>
<evidence type="ECO:0000255" key="1">
    <source>
        <dbReference type="HAMAP-Rule" id="MF_00071"/>
    </source>
</evidence>
<organism>
    <name type="scientific">Clostridium botulinum (strain Langeland / NCTC 10281 / Type F)</name>
    <dbReference type="NCBI Taxonomy" id="441772"/>
    <lineage>
        <taxon>Bacteria</taxon>
        <taxon>Bacillati</taxon>
        <taxon>Bacillota</taxon>
        <taxon>Clostridia</taxon>
        <taxon>Eubacteriales</taxon>
        <taxon>Clostridiaceae</taxon>
        <taxon>Clostridium</taxon>
    </lineage>
</organism>
<gene>
    <name evidence="1" type="primary">lepA</name>
    <name type="ordered locus">CLI_3016</name>
</gene>